<feature type="chain" id="PRO_0000257551" description="Putative pre-16S rRNA nuclease">
    <location>
        <begin position="1"/>
        <end position="143"/>
    </location>
</feature>
<sequence>MGKYNRILALDLGIKTCGFAISDQNWKISYPLEQFNFNRYDFASVISRIAFWMKEYPISILVLGYPLTLAGKISPRTKMVEYFADLVKKNYEIKVVFQDERLTTKQAQTFLLDLGISFKKRQKVIDKLAAQIILERFLNTKKG</sequence>
<evidence type="ECO:0000255" key="1">
    <source>
        <dbReference type="HAMAP-Rule" id="MF_00651"/>
    </source>
</evidence>
<evidence type="ECO:0000305" key="2"/>
<gene>
    <name type="ordered locus">MHP7448_0202</name>
</gene>
<dbReference type="EC" id="3.1.-.-" evidence="1"/>
<dbReference type="EMBL" id="AE017244">
    <property type="protein sequence ID" value="AAZ53576.2"/>
    <property type="status" value="ALT_INIT"/>
    <property type="molecule type" value="Genomic_DNA"/>
</dbReference>
<dbReference type="SMR" id="Q4A8G3"/>
<dbReference type="KEGG" id="mhp:MHP7448_0202"/>
<dbReference type="HOGENOM" id="CLU_098240_4_0_14"/>
<dbReference type="Proteomes" id="UP000000553">
    <property type="component" value="Chromosome"/>
</dbReference>
<dbReference type="GO" id="GO:0005829">
    <property type="term" value="C:cytosol"/>
    <property type="evidence" value="ECO:0007669"/>
    <property type="project" value="TreeGrafter"/>
</dbReference>
<dbReference type="GO" id="GO:0004518">
    <property type="term" value="F:nuclease activity"/>
    <property type="evidence" value="ECO:0007669"/>
    <property type="project" value="UniProtKB-KW"/>
</dbReference>
<dbReference type="GO" id="GO:0000967">
    <property type="term" value="P:rRNA 5'-end processing"/>
    <property type="evidence" value="ECO:0007669"/>
    <property type="project" value="UniProtKB-UniRule"/>
</dbReference>
<dbReference type="CDD" id="cd16964">
    <property type="entry name" value="YqgF"/>
    <property type="match status" value="1"/>
</dbReference>
<dbReference type="Gene3D" id="3.30.420.140">
    <property type="entry name" value="YqgF/RNase H-like domain"/>
    <property type="match status" value="1"/>
</dbReference>
<dbReference type="HAMAP" id="MF_00651">
    <property type="entry name" value="Nuclease_YqgF"/>
    <property type="match status" value="1"/>
</dbReference>
<dbReference type="InterPro" id="IPR012337">
    <property type="entry name" value="RNaseH-like_sf"/>
</dbReference>
<dbReference type="InterPro" id="IPR005227">
    <property type="entry name" value="YqgF"/>
</dbReference>
<dbReference type="InterPro" id="IPR006641">
    <property type="entry name" value="YqgF/RNaseH-like_dom"/>
</dbReference>
<dbReference type="InterPro" id="IPR037027">
    <property type="entry name" value="YqgF/RNaseH-like_dom_sf"/>
</dbReference>
<dbReference type="NCBIfam" id="TIGR00250">
    <property type="entry name" value="RNAse_H_YqgF"/>
    <property type="match status" value="1"/>
</dbReference>
<dbReference type="PANTHER" id="PTHR33317">
    <property type="entry name" value="POLYNUCLEOTIDYL TRANSFERASE, RIBONUCLEASE H-LIKE SUPERFAMILY PROTEIN"/>
    <property type="match status" value="1"/>
</dbReference>
<dbReference type="PANTHER" id="PTHR33317:SF4">
    <property type="entry name" value="POLYNUCLEOTIDYL TRANSFERASE, RIBONUCLEASE H-LIKE SUPERFAMILY PROTEIN"/>
    <property type="match status" value="1"/>
</dbReference>
<dbReference type="Pfam" id="PF03652">
    <property type="entry name" value="RuvX"/>
    <property type="match status" value="1"/>
</dbReference>
<dbReference type="SMART" id="SM00732">
    <property type="entry name" value="YqgFc"/>
    <property type="match status" value="1"/>
</dbReference>
<dbReference type="SUPFAM" id="SSF53098">
    <property type="entry name" value="Ribonuclease H-like"/>
    <property type="match status" value="1"/>
</dbReference>
<accession>Q4A8G3</accession>
<reference key="1">
    <citation type="journal article" date="2005" name="J. Bacteriol.">
        <title>Swine and poultry pathogens: the complete genome sequences of two strains of Mycoplasma hyopneumoniae and a strain of Mycoplasma synoviae.</title>
        <authorList>
            <person name="Vasconcelos A.T.R."/>
            <person name="Ferreira H.B."/>
            <person name="Bizarro C.V."/>
            <person name="Bonatto S.L."/>
            <person name="Carvalho M.O."/>
            <person name="Pinto P.M."/>
            <person name="Almeida D.F."/>
            <person name="Almeida L.G.P."/>
            <person name="Almeida R."/>
            <person name="Alves-Junior L."/>
            <person name="Assuncao E.N."/>
            <person name="Azevedo V.A.C."/>
            <person name="Bogo M.R."/>
            <person name="Brigido M.M."/>
            <person name="Brocchi M."/>
            <person name="Burity H.A."/>
            <person name="Camargo A.A."/>
            <person name="Camargo S.S."/>
            <person name="Carepo M.S."/>
            <person name="Carraro D.M."/>
            <person name="de Mattos Cascardo J.C."/>
            <person name="Castro L.A."/>
            <person name="Cavalcanti G."/>
            <person name="Chemale G."/>
            <person name="Collevatti R.G."/>
            <person name="Cunha C.W."/>
            <person name="Dallagiovanna B."/>
            <person name="Dambros B.P."/>
            <person name="Dellagostin O.A."/>
            <person name="Falcao C."/>
            <person name="Fantinatti-Garboggini F."/>
            <person name="Felipe M.S.S."/>
            <person name="Fiorentin L."/>
            <person name="Franco G.R."/>
            <person name="Freitas N.S.A."/>
            <person name="Frias D."/>
            <person name="Grangeiro T.B."/>
            <person name="Grisard E.C."/>
            <person name="Guimaraes C.T."/>
            <person name="Hungria M."/>
            <person name="Jardim S.N."/>
            <person name="Krieger M.A."/>
            <person name="Laurino J.P."/>
            <person name="Lima L.F.A."/>
            <person name="Lopes M.I."/>
            <person name="Loreto E.L.S."/>
            <person name="Madeira H.M.F."/>
            <person name="Manfio G.P."/>
            <person name="Maranhao A.Q."/>
            <person name="Martinkovics C.T."/>
            <person name="Medeiros S.R.B."/>
            <person name="Moreira M.A.M."/>
            <person name="Neiva M."/>
            <person name="Ramalho-Neto C.E."/>
            <person name="Nicolas M.F."/>
            <person name="Oliveira S.C."/>
            <person name="Paixao R.F.C."/>
            <person name="Pedrosa F.O."/>
            <person name="Pena S.D.J."/>
            <person name="Pereira M."/>
            <person name="Pereira-Ferrari L."/>
            <person name="Piffer I."/>
            <person name="Pinto L.S."/>
            <person name="Potrich D.P."/>
            <person name="Salim A.C.M."/>
            <person name="Santos F.R."/>
            <person name="Schmitt R."/>
            <person name="Schneider M.P.C."/>
            <person name="Schrank A."/>
            <person name="Schrank I.S."/>
            <person name="Schuck A.F."/>
            <person name="Seuanez H.N."/>
            <person name="Silva D.W."/>
            <person name="Silva R."/>
            <person name="Silva S.C."/>
            <person name="Soares C.M.A."/>
            <person name="Souza K.R.L."/>
            <person name="Souza R.C."/>
            <person name="Staats C.C."/>
            <person name="Steffens M.B.R."/>
            <person name="Teixeira S.M.R."/>
            <person name="Urmenyi T.P."/>
            <person name="Vainstein M.H."/>
            <person name="Zuccherato L.W."/>
            <person name="Simpson A.J.G."/>
            <person name="Zaha A."/>
        </authorList>
    </citation>
    <scope>NUCLEOTIDE SEQUENCE [LARGE SCALE GENOMIC DNA]</scope>
    <source>
        <strain>7448</strain>
    </source>
</reference>
<name>YQGF_MESH7</name>
<comment type="function">
    <text evidence="1">Could be a nuclease involved in processing of the 5'-end of pre-16S rRNA.</text>
</comment>
<comment type="subcellular location">
    <subcellularLocation>
        <location evidence="1">Cytoplasm</location>
    </subcellularLocation>
</comment>
<comment type="similarity">
    <text evidence="1">Belongs to the YqgF nuclease family.</text>
</comment>
<comment type="sequence caution" evidence="2">
    <conflict type="erroneous initiation">
        <sequence resource="EMBL-CDS" id="AAZ53576"/>
    </conflict>
    <text>Truncated N-terminus.</text>
</comment>
<organism>
    <name type="scientific">Mesomycoplasma hyopneumoniae (strain 7448)</name>
    <name type="common">Mycoplasma hyopneumoniae</name>
    <dbReference type="NCBI Taxonomy" id="262722"/>
    <lineage>
        <taxon>Bacteria</taxon>
        <taxon>Bacillati</taxon>
        <taxon>Mycoplasmatota</taxon>
        <taxon>Mycoplasmoidales</taxon>
        <taxon>Metamycoplasmataceae</taxon>
        <taxon>Mesomycoplasma</taxon>
    </lineage>
</organism>
<proteinExistence type="inferred from homology"/>
<keyword id="KW-0963">Cytoplasm</keyword>
<keyword id="KW-0378">Hydrolase</keyword>
<keyword id="KW-0540">Nuclease</keyword>
<keyword id="KW-0690">Ribosome biogenesis</keyword>
<protein>
    <recommendedName>
        <fullName evidence="1">Putative pre-16S rRNA nuclease</fullName>
        <ecNumber evidence="1">3.1.-.-</ecNumber>
    </recommendedName>
</protein>